<organism>
    <name type="scientific">Aquifex aeolicus (strain VF5)</name>
    <dbReference type="NCBI Taxonomy" id="224324"/>
    <lineage>
        <taxon>Bacteria</taxon>
        <taxon>Pseudomonadati</taxon>
        <taxon>Aquificota</taxon>
        <taxon>Aquificia</taxon>
        <taxon>Aquificales</taxon>
        <taxon>Aquificaceae</taxon>
        <taxon>Aquifex</taxon>
    </lineage>
</organism>
<accession>O66722</accession>
<name>DXR_AQUAE</name>
<protein>
    <recommendedName>
        <fullName evidence="1">1-deoxy-D-xylulose 5-phosphate reductoisomerase</fullName>
        <shortName evidence="1">DXP reductoisomerase</shortName>
        <ecNumber evidence="1">1.1.1.267</ecNumber>
    </recommendedName>
    <alternativeName>
        <fullName evidence="1">1-deoxyxylulose-5-phosphate reductoisomerase</fullName>
    </alternativeName>
    <alternativeName>
        <fullName evidence="1">2-C-methyl-D-erythritol 4-phosphate synthase</fullName>
    </alternativeName>
</protein>
<feature type="chain" id="PRO_0000163598" description="1-deoxy-D-xylulose 5-phosphate reductoisomerase">
    <location>
        <begin position="1"/>
        <end position="380"/>
    </location>
</feature>
<feature type="binding site" evidence="1">
    <location>
        <position position="9"/>
    </location>
    <ligand>
        <name>NADPH</name>
        <dbReference type="ChEBI" id="CHEBI:57783"/>
    </ligand>
</feature>
<feature type="binding site" evidence="1">
    <location>
        <position position="10"/>
    </location>
    <ligand>
        <name>NADPH</name>
        <dbReference type="ChEBI" id="CHEBI:57783"/>
    </ligand>
</feature>
<feature type="binding site" evidence="1">
    <location>
        <position position="11"/>
    </location>
    <ligand>
        <name>NADPH</name>
        <dbReference type="ChEBI" id="CHEBI:57783"/>
    </ligand>
</feature>
<feature type="binding site" evidence="1">
    <location>
        <position position="12"/>
    </location>
    <ligand>
        <name>NADPH</name>
        <dbReference type="ChEBI" id="CHEBI:57783"/>
    </ligand>
</feature>
<feature type="binding site" evidence="1">
    <location>
        <position position="36"/>
    </location>
    <ligand>
        <name>NADPH</name>
        <dbReference type="ChEBI" id="CHEBI:57783"/>
    </ligand>
</feature>
<feature type="binding site" evidence="1">
    <location>
        <position position="117"/>
    </location>
    <ligand>
        <name>NADPH</name>
        <dbReference type="ChEBI" id="CHEBI:57783"/>
    </ligand>
</feature>
<feature type="binding site" evidence="1">
    <location>
        <position position="118"/>
    </location>
    <ligand>
        <name>1-deoxy-D-xylulose 5-phosphate</name>
        <dbReference type="ChEBI" id="CHEBI:57792"/>
    </ligand>
</feature>
<feature type="binding site" evidence="1">
    <location>
        <position position="119"/>
    </location>
    <ligand>
        <name>NADPH</name>
        <dbReference type="ChEBI" id="CHEBI:57783"/>
    </ligand>
</feature>
<feature type="binding site" evidence="1">
    <location>
        <position position="139"/>
    </location>
    <ligand>
        <name>Mn(2+)</name>
        <dbReference type="ChEBI" id="CHEBI:29035"/>
    </ligand>
</feature>
<feature type="binding site" evidence="1">
    <location>
        <position position="140"/>
    </location>
    <ligand>
        <name>1-deoxy-D-xylulose 5-phosphate</name>
        <dbReference type="ChEBI" id="CHEBI:57792"/>
    </ligand>
</feature>
<feature type="binding site" evidence="1">
    <location>
        <position position="141"/>
    </location>
    <ligand>
        <name>1-deoxy-D-xylulose 5-phosphate</name>
        <dbReference type="ChEBI" id="CHEBI:57792"/>
    </ligand>
</feature>
<feature type="binding site" evidence="1">
    <location>
        <position position="141"/>
    </location>
    <ligand>
        <name>Mn(2+)</name>
        <dbReference type="ChEBI" id="CHEBI:29035"/>
    </ligand>
</feature>
<feature type="binding site" evidence="1">
    <location>
        <position position="165"/>
    </location>
    <ligand>
        <name>1-deoxy-D-xylulose 5-phosphate</name>
        <dbReference type="ChEBI" id="CHEBI:57792"/>
    </ligand>
</feature>
<feature type="binding site" evidence="1">
    <location>
        <position position="188"/>
    </location>
    <ligand>
        <name>1-deoxy-D-xylulose 5-phosphate</name>
        <dbReference type="ChEBI" id="CHEBI:57792"/>
    </ligand>
</feature>
<feature type="binding site" evidence="1">
    <location>
        <position position="194"/>
    </location>
    <ligand>
        <name>NADPH</name>
        <dbReference type="ChEBI" id="CHEBI:57783"/>
    </ligand>
</feature>
<feature type="binding site" evidence="1">
    <location>
        <position position="201"/>
    </location>
    <ligand>
        <name>1-deoxy-D-xylulose 5-phosphate</name>
        <dbReference type="ChEBI" id="CHEBI:57792"/>
    </ligand>
</feature>
<feature type="binding site" evidence="1">
    <location>
        <position position="206"/>
    </location>
    <ligand>
        <name>1-deoxy-D-xylulose 5-phosphate</name>
        <dbReference type="ChEBI" id="CHEBI:57792"/>
    </ligand>
</feature>
<feature type="binding site" evidence="1">
    <location>
        <position position="207"/>
    </location>
    <ligand>
        <name>1-deoxy-D-xylulose 5-phosphate</name>
        <dbReference type="ChEBI" id="CHEBI:57792"/>
    </ligand>
</feature>
<feature type="binding site" evidence="1">
    <location>
        <position position="210"/>
    </location>
    <ligand>
        <name>1-deoxy-D-xylulose 5-phosphate</name>
        <dbReference type="ChEBI" id="CHEBI:57792"/>
    </ligand>
</feature>
<feature type="binding site" evidence="1">
    <location>
        <position position="210"/>
    </location>
    <ligand>
        <name>Mn(2+)</name>
        <dbReference type="ChEBI" id="CHEBI:29035"/>
    </ligand>
</feature>
<keyword id="KW-0414">Isoprene biosynthesis</keyword>
<keyword id="KW-0464">Manganese</keyword>
<keyword id="KW-0479">Metal-binding</keyword>
<keyword id="KW-0521">NADP</keyword>
<keyword id="KW-0560">Oxidoreductase</keyword>
<keyword id="KW-1185">Reference proteome</keyword>
<comment type="function">
    <text evidence="1">Catalyzes the NADPH-dependent rearrangement and reduction of 1-deoxy-D-xylulose-5-phosphate (DXP) to 2-C-methyl-D-erythritol 4-phosphate (MEP).</text>
</comment>
<comment type="catalytic activity">
    <reaction evidence="1">
        <text>2-C-methyl-D-erythritol 4-phosphate + NADP(+) = 1-deoxy-D-xylulose 5-phosphate + NADPH + H(+)</text>
        <dbReference type="Rhea" id="RHEA:13717"/>
        <dbReference type="ChEBI" id="CHEBI:15378"/>
        <dbReference type="ChEBI" id="CHEBI:57783"/>
        <dbReference type="ChEBI" id="CHEBI:57792"/>
        <dbReference type="ChEBI" id="CHEBI:58262"/>
        <dbReference type="ChEBI" id="CHEBI:58349"/>
        <dbReference type="EC" id="1.1.1.267"/>
    </reaction>
    <physiologicalReaction direction="right-to-left" evidence="1">
        <dbReference type="Rhea" id="RHEA:13719"/>
    </physiologicalReaction>
</comment>
<comment type="cofactor">
    <cofactor evidence="1">
        <name>Mg(2+)</name>
        <dbReference type="ChEBI" id="CHEBI:18420"/>
    </cofactor>
    <cofactor evidence="1">
        <name>Mn(2+)</name>
        <dbReference type="ChEBI" id="CHEBI:29035"/>
    </cofactor>
</comment>
<comment type="pathway">
    <text evidence="1">Isoprenoid biosynthesis; isopentenyl diphosphate biosynthesis via DXP pathway; isopentenyl diphosphate from 1-deoxy-D-xylulose 5-phosphate: step 1/6.</text>
</comment>
<comment type="similarity">
    <text evidence="1">Belongs to the DXR family.</text>
</comment>
<sequence>MKLGVLGSTGSVGSQTLQVYENFRDEIELVGILANRASEKLLQQAKKYKPKYVVSYQEPAKEWLESLPEGVKYLKGDEGLKAIIEESERLMNAISGIYGIKPAYEVIKAGKTLLASNKESILCLGEIIRKNRERVIPVDSEHNALFQLLSSVKREEVKHVYLTASGGPFKDKSLEELKTASVEEALRHPRWNMGAKITIDSATLMNKGFEMLEAHFLFDFPIENIKVVIHPQSFVHGILELIDNSFLMHTSQTDMKIPIMHALFYPKRKEYPFKKVSLLELSPITFEKVDTTKFKAIDLAKWAGFMGGVYIPVLVGADEEAVNLFLNKKIGFLDIVDLIEQALSEVNIKDPQSVEEILEAVEWGRQKVREIYERKYAGKG</sequence>
<reference key="1">
    <citation type="journal article" date="1998" name="Nature">
        <title>The complete genome of the hyperthermophilic bacterium Aquifex aeolicus.</title>
        <authorList>
            <person name="Deckert G."/>
            <person name="Warren P.V."/>
            <person name="Gaasterland T."/>
            <person name="Young W.G."/>
            <person name="Lenox A.L."/>
            <person name="Graham D.E."/>
            <person name="Overbeek R."/>
            <person name="Snead M.A."/>
            <person name="Keller M."/>
            <person name="Aujay M."/>
            <person name="Huber R."/>
            <person name="Feldman R.A."/>
            <person name="Short J.M."/>
            <person name="Olsen G.J."/>
            <person name="Swanson R.V."/>
        </authorList>
    </citation>
    <scope>NUCLEOTIDE SEQUENCE [LARGE SCALE GENOMIC DNA]</scope>
    <source>
        <strain>VF5</strain>
    </source>
</reference>
<proteinExistence type="inferred from homology"/>
<evidence type="ECO:0000255" key="1">
    <source>
        <dbReference type="HAMAP-Rule" id="MF_00183"/>
    </source>
</evidence>
<dbReference type="EC" id="1.1.1.267" evidence="1"/>
<dbReference type="EMBL" id="AE000657">
    <property type="protein sequence ID" value="AAC06688.1"/>
    <property type="molecule type" value="Genomic_DNA"/>
</dbReference>
<dbReference type="PIR" id="F70336">
    <property type="entry name" value="F70336"/>
</dbReference>
<dbReference type="RefSeq" id="NP_213282.1">
    <property type="nucleotide sequence ID" value="NC_000918.1"/>
</dbReference>
<dbReference type="RefSeq" id="WP_010880220.1">
    <property type="nucleotide sequence ID" value="NC_000918.1"/>
</dbReference>
<dbReference type="SMR" id="O66722"/>
<dbReference type="FunCoup" id="O66722">
    <property type="interactions" value="306"/>
</dbReference>
<dbReference type="STRING" id="224324.aq_404"/>
<dbReference type="EnsemblBacteria" id="AAC06688">
    <property type="protein sequence ID" value="AAC06688"/>
    <property type="gene ID" value="aq_404"/>
</dbReference>
<dbReference type="KEGG" id="aae:aq_404"/>
<dbReference type="PATRIC" id="fig|224324.8.peg.332"/>
<dbReference type="eggNOG" id="COG0743">
    <property type="taxonomic scope" value="Bacteria"/>
</dbReference>
<dbReference type="HOGENOM" id="CLU_035714_4_0_0"/>
<dbReference type="InParanoid" id="O66722"/>
<dbReference type="OrthoDB" id="9806546at2"/>
<dbReference type="UniPathway" id="UPA00056">
    <property type="reaction ID" value="UER00092"/>
</dbReference>
<dbReference type="Proteomes" id="UP000000798">
    <property type="component" value="Chromosome"/>
</dbReference>
<dbReference type="GO" id="GO:0030604">
    <property type="term" value="F:1-deoxy-D-xylulose-5-phosphate reductoisomerase activity"/>
    <property type="evidence" value="ECO:0000318"/>
    <property type="project" value="GO_Central"/>
</dbReference>
<dbReference type="GO" id="GO:0030145">
    <property type="term" value="F:manganese ion binding"/>
    <property type="evidence" value="ECO:0000318"/>
    <property type="project" value="GO_Central"/>
</dbReference>
<dbReference type="GO" id="GO:0070402">
    <property type="term" value="F:NADPH binding"/>
    <property type="evidence" value="ECO:0000318"/>
    <property type="project" value="GO_Central"/>
</dbReference>
<dbReference type="GO" id="GO:0051484">
    <property type="term" value="P:isopentenyl diphosphate biosynthetic process, methylerythritol 4-phosphate pathway involved in terpenoid biosynthetic process"/>
    <property type="evidence" value="ECO:0000318"/>
    <property type="project" value="GO_Central"/>
</dbReference>
<dbReference type="Gene3D" id="1.10.1740.10">
    <property type="match status" value="1"/>
</dbReference>
<dbReference type="Gene3D" id="3.40.50.720">
    <property type="entry name" value="NAD(P)-binding Rossmann-like Domain"/>
    <property type="match status" value="1"/>
</dbReference>
<dbReference type="HAMAP" id="MF_00183">
    <property type="entry name" value="DXP_reductoisom"/>
    <property type="match status" value="1"/>
</dbReference>
<dbReference type="InterPro" id="IPR003821">
    <property type="entry name" value="DXP_reductoisomerase"/>
</dbReference>
<dbReference type="InterPro" id="IPR013644">
    <property type="entry name" value="DXP_reductoisomerase_C"/>
</dbReference>
<dbReference type="InterPro" id="IPR013512">
    <property type="entry name" value="DXP_reductoisomerase_N"/>
</dbReference>
<dbReference type="InterPro" id="IPR026877">
    <property type="entry name" value="DXPR_C"/>
</dbReference>
<dbReference type="InterPro" id="IPR036169">
    <property type="entry name" value="DXPR_C_sf"/>
</dbReference>
<dbReference type="InterPro" id="IPR036291">
    <property type="entry name" value="NAD(P)-bd_dom_sf"/>
</dbReference>
<dbReference type="NCBIfam" id="TIGR00243">
    <property type="entry name" value="Dxr"/>
    <property type="match status" value="1"/>
</dbReference>
<dbReference type="PANTHER" id="PTHR30525">
    <property type="entry name" value="1-DEOXY-D-XYLULOSE 5-PHOSPHATE REDUCTOISOMERASE"/>
    <property type="match status" value="1"/>
</dbReference>
<dbReference type="PANTHER" id="PTHR30525:SF0">
    <property type="entry name" value="1-DEOXY-D-XYLULOSE 5-PHOSPHATE REDUCTOISOMERASE, CHLOROPLASTIC"/>
    <property type="match status" value="1"/>
</dbReference>
<dbReference type="Pfam" id="PF08436">
    <property type="entry name" value="DXP_redisom_C"/>
    <property type="match status" value="1"/>
</dbReference>
<dbReference type="Pfam" id="PF02670">
    <property type="entry name" value="DXP_reductoisom"/>
    <property type="match status" value="1"/>
</dbReference>
<dbReference type="Pfam" id="PF13288">
    <property type="entry name" value="DXPR_C"/>
    <property type="match status" value="1"/>
</dbReference>
<dbReference type="PIRSF" id="PIRSF006205">
    <property type="entry name" value="Dxp_reductismrs"/>
    <property type="match status" value="1"/>
</dbReference>
<dbReference type="SUPFAM" id="SSF69055">
    <property type="entry name" value="1-deoxy-D-xylulose-5-phosphate reductoisomerase, C-terminal domain"/>
    <property type="match status" value="1"/>
</dbReference>
<dbReference type="SUPFAM" id="SSF55347">
    <property type="entry name" value="Glyceraldehyde-3-phosphate dehydrogenase-like, C-terminal domain"/>
    <property type="match status" value="1"/>
</dbReference>
<dbReference type="SUPFAM" id="SSF51735">
    <property type="entry name" value="NAD(P)-binding Rossmann-fold domains"/>
    <property type="match status" value="1"/>
</dbReference>
<gene>
    <name evidence="1" type="primary">dxr</name>
    <name type="ordered locus">aq_404</name>
</gene>